<feature type="signal peptide" evidence="2">
    <location>
        <begin position="1"/>
        <end position="24"/>
    </location>
</feature>
<feature type="chain" id="PRO_0000031932" description="Defensin-like protein 247">
    <location>
        <begin position="25"/>
        <end position="95"/>
    </location>
</feature>
<feature type="disulfide bond" evidence="1">
    <location>
        <begin position="37"/>
        <end position="94"/>
    </location>
</feature>
<feature type="disulfide bond" evidence="1">
    <location>
        <begin position="48"/>
        <end position="77"/>
    </location>
</feature>
<feature type="disulfide bond" evidence="1">
    <location>
        <begin position="56"/>
        <end position="87"/>
    </location>
</feature>
<feature type="disulfide bond" evidence="1">
    <location>
        <begin position="75"/>
        <end position="89"/>
    </location>
</feature>
<feature type="sequence conflict" description="In Ref. 4; AAM66956." evidence="3" ref="4">
    <original>G</original>
    <variation>V</variation>
    <location>
        <position position="45"/>
    </location>
</feature>
<keyword id="KW-0929">Antimicrobial</keyword>
<keyword id="KW-1015">Disulfide bond</keyword>
<keyword id="KW-0295">Fungicide</keyword>
<keyword id="KW-0611">Plant defense</keyword>
<keyword id="KW-1185">Reference proteome</keyword>
<keyword id="KW-0964">Secreted</keyword>
<keyword id="KW-0732">Signal</keyword>
<protein>
    <recommendedName>
        <fullName>Defensin-like protein 247</fullName>
    </recommendedName>
    <alternativeName>
        <fullName>S locus cysteine-rich-like protein 6</fullName>
        <shortName>Protein SCRL6</shortName>
        <shortName>SCR-like protein 6</shortName>
    </alternativeName>
</protein>
<accession>P82625</accession>
<accession>Q570C5</accession>
<accession>Q8L952</accession>
<organism evidence="3">
    <name type="scientific">Arabidopsis thaliana</name>
    <name type="common">Mouse-ear cress</name>
    <dbReference type="NCBI Taxonomy" id="3702"/>
    <lineage>
        <taxon>Eukaryota</taxon>
        <taxon>Viridiplantae</taxon>
        <taxon>Streptophyta</taxon>
        <taxon>Embryophyta</taxon>
        <taxon>Tracheophyta</taxon>
        <taxon>Spermatophyta</taxon>
        <taxon>Magnoliopsida</taxon>
        <taxon>eudicotyledons</taxon>
        <taxon>Gunneridae</taxon>
        <taxon>Pentapetalae</taxon>
        <taxon>rosids</taxon>
        <taxon>malvids</taxon>
        <taxon>Brassicales</taxon>
        <taxon>Brassicaceae</taxon>
        <taxon>Camelineae</taxon>
        <taxon>Arabidopsis</taxon>
    </lineage>
</organism>
<reference evidence="3" key="1">
    <citation type="journal article" date="2000" name="Nature">
        <title>Sequence and analysis of chromosome 1 of the plant Arabidopsis thaliana.</title>
        <authorList>
            <person name="Theologis A."/>
            <person name="Ecker J.R."/>
            <person name="Palm C.J."/>
            <person name="Federspiel N.A."/>
            <person name="Kaul S."/>
            <person name="White O."/>
            <person name="Alonso J."/>
            <person name="Altafi H."/>
            <person name="Araujo R."/>
            <person name="Bowman C.L."/>
            <person name="Brooks S.Y."/>
            <person name="Buehler E."/>
            <person name="Chan A."/>
            <person name="Chao Q."/>
            <person name="Chen H."/>
            <person name="Cheuk R.F."/>
            <person name="Chin C.W."/>
            <person name="Chung M.K."/>
            <person name="Conn L."/>
            <person name="Conway A.B."/>
            <person name="Conway A.R."/>
            <person name="Creasy T.H."/>
            <person name="Dewar K."/>
            <person name="Dunn P."/>
            <person name="Etgu P."/>
            <person name="Feldblyum T.V."/>
            <person name="Feng J.-D."/>
            <person name="Fong B."/>
            <person name="Fujii C.Y."/>
            <person name="Gill J.E."/>
            <person name="Goldsmith A.D."/>
            <person name="Haas B."/>
            <person name="Hansen N.F."/>
            <person name="Hughes B."/>
            <person name="Huizar L."/>
            <person name="Hunter J.L."/>
            <person name="Jenkins J."/>
            <person name="Johnson-Hopson C."/>
            <person name="Khan S."/>
            <person name="Khaykin E."/>
            <person name="Kim C.J."/>
            <person name="Koo H.L."/>
            <person name="Kremenetskaia I."/>
            <person name="Kurtz D.B."/>
            <person name="Kwan A."/>
            <person name="Lam B."/>
            <person name="Langin-Hooper S."/>
            <person name="Lee A."/>
            <person name="Lee J.M."/>
            <person name="Lenz C.A."/>
            <person name="Li J.H."/>
            <person name="Li Y.-P."/>
            <person name="Lin X."/>
            <person name="Liu S.X."/>
            <person name="Liu Z.A."/>
            <person name="Luros J.S."/>
            <person name="Maiti R."/>
            <person name="Marziali A."/>
            <person name="Militscher J."/>
            <person name="Miranda M."/>
            <person name="Nguyen M."/>
            <person name="Nierman W.C."/>
            <person name="Osborne B.I."/>
            <person name="Pai G."/>
            <person name="Peterson J."/>
            <person name="Pham P.K."/>
            <person name="Rizzo M."/>
            <person name="Rooney T."/>
            <person name="Rowley D."/>
            <person name="Sakano H."/>
            <person name="Salzberg S.L."/>
            <person name="Schwartz J.R."/>
            <person name="Shinn P."/>
            <person name="Southwick A.M."/>
            <person name="Sun H."/>
            <person name="Tallon L.J."/>
            <person name="Tambunga G."/>
            <person name="Toriumi M.J."/>
            <person name="Town C.D."/>
            <person name="Utterback T."/>
            <person name="Van Aken S."/>
            <person name="Vaysberg M."/>
            <person name="Vysotskaia V.S."/>
            <person name="Walker M."/>
            <person name="Wu D."/>
            <person name="Yu G."/>
            <person name="Fraser C.M."/>
            <person name="Venter J.C."/>
            <person name="Davis R.W."/>
        </authorList>
    </citation>
    <scope>NUCLEOTIDE SEQUENCE [LARGE SCALE GENOMIC DNA]</scope>
    <source>
        <strain>cv. Columbia</strain>
    </source>
</reference>
<reference key="2">
    <citation type="journal article" date="2017" name="Plant J.">
        <title>Araport11: a complete reannotation of the Arabidopsis thaliana reference genome.</title>
        <authorList>
            <person name="Cheng C.Y."/>
            <person name="Krishnakumar V."/>
            <person name="Chan A.P."/>
            <person name="Thibaud-Nissen F."/>
            <person name="Schobel S."/>
            <person name="Town C.D."/>
        </authorList>
    </citation>
    <scope>GENOME REANNOTATION</scope>
    <source>
        <strain>cv. Columbia</strain>
    </source>
</reference>
<reference key="3">
    <citation type="submission" date="2005-03" db="EMBL/GenBank/DDBJ databases">
        <title>Large-scale analysis of RIKEN Arabidopsis full-length (RAFL) cDNAs.</title>
        <authorList>
            <person name="Totoki Y."/>
            <person name="Seki M."/>
            <person name="Ishida J."/>
            <person name="Nakajima M."/>
            <person name="Enju A."/>
            <person name="Kamiya A."/>
            <person name="Narusaka M."/>
            <person name="Shin-i T."/>
            <person name="Nakagawa M."/>
            <person name="Sakamoto N."/>
            <person name="Oishi K."/>
            <person name="Kohara Y."/>
            <person name="Kobayashi M."/>
            <person name="Toyoda A."/>
            <person name="Sakaki Y."/>
            <person name="Sakurai T."/>
            <person name="Iida K."/>
            <person name="Akiyama K."/>
            <person name="Satou M."/>
            <person name="Toyoda T."/>
            <person name="Konagaya A."/>
            <person name="Carninci P."/>
            <person name="Kawai J."/>
            <person name="Hayashizaki Y."/>
            <person name="Shinozaki K."/>
        </authorList>
    </citation>
    <scope>NUCLEOTIDE SEQUENCE [LARGE SCALE MRNA]</scope>
    <source>
        <strain>cv. Columbia</strain>
    </source>
</reference>
<reference key="4">
    <citation type="submission" date="2002-03" db="EMBL/GenBank/DDBJ databases">
        <title>Full-length cDNA from Arabidopsis thaliana.</title>
        <authorList>
            <person name="Brover V.V."/>
            <person name="Troukhan M.E."/>
            <person name="Alexandrov N.A."/>
            <person name="Lu Y.-P."/>
            <person name="Flavell R.B."/>
            <person name="Feldmann K.A."/>
        </authorList>
    </citation>
    <scope>NUCLEOTIDE SEQUENCE [LARGE SCALE MRNA]</scope>
</reference>
<reference evidence="3" key="5">
    <citation type="journal article" date="2001" name="Plant Mol. Biol.">
        <title>Two large Arabidopsis thaliana gene families are homologous to the Brassica gene superfamily that encodes pollen coat proteins and the male component of the self-incompatibility response.</title>
        <authorList>
            <person name="Vanoosthuyse V."/>
            <person name="Miege C."/>
            <person name="Dumas C."/>
            <person name="Cock J.M."/>
        </authorList>
    </citation>
    <scope>IDENTIFICATION</scope>
</reference>
<reference key="6">
    <citation type="journal article" date="2005" name="Plant Physiol.">
        <title>Genome organization of more than 300 defensin-like genes in Arabidopsis.</title>
        <authorList>
            <person name="Silverstein K.A.T."/>
            <person name="Graham M.A."/>
            <person name="Paape T.D."/>
            <person name="VandenBosch K.A."/>
        </authorList>
    </citation>
    <scope>GENE FAMILY</scope>
</reference>
<proteinExistence type="inferred from homology"/>
<dbReference type="EMBL" id="AC018908">
    <property type="status" value="NOT_ANNOTATED_CDS"/>
    <property type="molecule type" value="Genomic_DNA"/>
</dbReference>
<dbReference type="EMBL" id="CP002684">
    <property type="protein sequence ID" value="AEE33757.1"/>
    <property type="molecule type" value="Genomic_DNA"/>
</dbReference>
<dbReference type="EMBL" id="AK220784">
    <property type="protein sequence ID" value="BAD94015.1"/>
    <property type="molecule type" value="mRNA"/>
</dbReference>
<dbReference type="EMBL" id="AY088634">
    <property type="protein sequence ID" value="AAM66956.1"/>
    <property type="status" value="ALT_INIT"/>
    <property type="molecule type" value="mRNA"/>
</dbReference>
<dbReference type="RefSeq" id="NP_564768.1">
    <property type="nucleotide sequence ID" value="NM_104779.4"/>
</dbReference>
<dbReference type="SMR" id="P82625"/>
<dbReference type="PaxDb" id="3702-AT1G60985.1"/>
<dbReference type="ProteomicsDB" id="224654"/>
<dbReference type="EnsemblPlants" id="AT1G60985.1">
    <property type="protein sequence ID" value="AT1G60985.1"/>
    <property type="gene ID" value="AT1G60985"/>
</dbReference>
<dbReference type="GeneID" id="842390"/>
<dbReference type="Gramene" id="AT1G60985.1">
    <property type="protein sequence ID" value="AT1G60985.1"/>
    <property type="gene ID" value="AT1G60985"/>
</dbReference>
<dbReference type="KEGG" id="ath:AT1G60985"/>
<dbReference type="Araport" id="AT1G60985"/>
<dbReference type="TAIR" id="AT1G60985">
    <property type="gene designation" value="SCRL6"/>
</dbReference>
<dbReference type="HOGENOM" id="CLU_174283_0_0_1"/>
<dbReference type="InParanoid" id="P82625"/>
<dbReference type="OrthoDB" id="1020967at2759"/>
<dbReference type="PhylomeDB" id="P82625"/>
<dbReference type="PRO" id="PR:P82625"/>
<dbReference type="Proteomes" id="UP000006548">
    <property type="component" value="Chromosome 1"/>
</dbReference>
<dbReference type="ExpressionAtlas" id="P82625">
    <property type="expression patterns" value="differential"/>
</dbReference>
<dbReference type="GO" id="GO:0005576">
    <property type="term" value="C:extracellular region"/>
    <property type="evidence" value="ECO:0007669"/>
    <property type="project" value="UniProtKB-SubCell"/>
</dbReference>
<dbReference type="GO" id="GO:0050832">
    <property type="term" value="P:defense response to fungus"/>
    <property type="evidence" value="ECO:0007669"/>
    <property type="project" value="UniProtKB-KW"/>
</dbReference>
<dbReference type="GO" id="GO:0031640">
    <property type="term" value="P:killing of cells of another organism"/>
    <property type="evidence" value="ECO:0007669"/>
    <property type="project" value="UniProtKB-KW"/>
</dbReference>
<dbReference type="GO" id="GO:0007165">
    <property type="term" value="P:signal transduction"/>
    <property type="evidence" value="ECO:0007669"/>
    <property type="project" value="InterPro"/>
</dbReference>
<dbReference type="InterPro" id="IPR010682">
    <property type="entry name" value="SCRL"/>
</dbReference>
<dbReference type="PANTHER" id="PTHR34450">
    <property type="entry name" value="DEFENSIN-LIKE PROTEIN 245-RELATED"/>
    <property type="match status" value="1"/>
</dbReference>
<dbReference type="PANTHER" id="PTHR34450:SF10">
    <property type="entry name" value="DEFENSIN-LIKE PROTEIN 245-RELATED"/>
    <property type="match status" value="1"/>
</dbReference>
<dbReference type="Pfam" id="PF06876">
    <property type="entry name" value="SCRL"/>
    <property type="match status" value="1"/>
</dbReference>
<sequence>MKFAAIFLVTCVFFSLFSSNLSQGEKLSMDPTRRPWCPSKKQMFGGNCGNDGDSLCLMLLAASWDESLRHSSISCNCTTYPNYKILCSCPNMICP</sequence>
<name>DF247_ARATH</name>
<evidence type="ECO:0000250" key="1"/>
<evidence type="ECO:0000255" key="2"/>
<evidence type="ECO:0000305" key="3"/>
<gene>
    <name type="primary">SCRL6</name>
    <name type="ordered locus">At1g60985</name>
    <name type="ORF">T7P1</name>
</gene>
<comment type="subcellular location">
    <subcellularLocation>
        <location evidence="1">Secreted</location>
    </subcellularLocation>
</comment>
<comment type="similarity">
    <text evidence="3">Belongs to the DEFL family.</text>
</comment>
<comment type="sequence caution" evidence="3">
    <conflict type="erroneous initiation">
        <sequence resource="EMBL-CDS" id="AAM66956"/>
    </conflict>
</comment>